<accession>Q54LB3</accession>
<name>HBX12_DICDI</name>
<keyword id="KW-0175">Coiled coil</keyword>
<keyword id="KW-0217">Developmental protein</keyword>
<keyword id="KW-0238">DNA-binding</keyword>
<keyword id="KW-0371">Homeobox</keyword>
<keyword id="KW-0539">Nucleus</keyword>
<keyword id="KW-1185">Reference proteome</keyword>
<keyword id="KW-0804">Transcription</keyword>
<keyword id="KW-0805">Transcription regulation</keyword>
<dbReference type="EMBL" id="AAFI02000089">
    <property type="protein sequence ID" value="EAL64122.1"/>
    <property type="molecule type" value="Genomic_DNA"/>
</dbReference>
<dbReference type="RefSeq" id="XP_637648.1">
    <property type="nucleotide sequence ID" value="XM_632556.1"/>
</dbReference>
<dbReference type="SMR" id="Q54LB3"/>
<dbReference type="GlyGen" id="Q54LB3">
    <property type="glycosylation" value="2 sites"/>
</dbReference>
<dbReference type="PaxDb" id="44689-DDB0220477"/>
<dbReference type="EnsemblProtists" id="EAL64122">
    <property type="protein sequence ID" value="EAL64122"/>
    <property type="gene ID" value="DDB_G0286733"/>
</dbReference>
<dbReference type="GeneID" id="8625788"/>
<dbReference type="KEGG" id="ddi:DDB_G0286733"/>
<dbReference type="dictyBase" id="DDB_G0286733">
    <property type="gene designation" value="hbx12"/>
</dbReference>
<dbReference type="VEuPathDB" id="AmoebaDB:DDB_G0286733"/>
<dbReference type="eggNOG" id="ENOG502RHA1">
    <property type="taxonomic scope" value="Eukaryota"/>
</dbReference>
<dbReference type="HOGENOM" id="CLU_336924_0_0_1"/>
<dbReference type="InParanoid" id="Q54LB3"/>
<dbReference type="PRO" id="PR:Q54LB3"/>
<dbReference type="Proteomes" id="UP000002195">
    <property type="component" value="Chromosome 4"/>
</dbReference>
<dbReference type="GO" id="GO:0005634">
    <property type="term" value="C:nucleus"/>
    <property type="evidence" value="ECO:0007669"/>
    <property type="project" value="UniProtKB-SubCell"/>
</dbReference>
<dbReference type="GO" id="GO:0003677">
    <property type="term" value="F:DNA binding"/>
    <property type="evidence" value="ECO:0007669"/>
    <property type="project" value="UniProtKB-KW"/>
</dbReference>
<dbReference type="CDD" id="cd00086">
    <property type="entry name" value="homeodomain"/>
    <property type="match status" value="1"/>
</dbReference>
<dbReference type="Gene3D" id="1.10.10.60">
    <property type="entry name" value="Homeodomain-like"/>
    <property type="match status" value="1"/>
</dbReference>
<dbReference type="InterPro" id="IPR001356">
    <property type="entry name" value="HD"/>
</dbReference>
<dbReference type="InterPro" id="IPR009057">
    <property type="entry name" value="Homeodomain-like_sf"/>
</dbReference>
<dbReference type="PANTHER" id="PTHR48125:SF12">
    <property type="entry name" value="AT HOOK TRANSCRIPTION FACTOR FAMILY-RELATED"/>
    <property type="match status" value="1"/>
</dbReference>
<dbReference type="PANTHER" id="PTHR48125">
    <property type="entry name" value="LP07818P1"/>
    <property type="match status" value="1"/>
</dbReference>
<dbReference type="Pfam" id="PF00046">
    <property type="entry name" value="Homeodomain"/>
    <property type="match status" value="1"/>
</dbReference>
<dbReference type="SMART" id="SM00389">
    <property type="entry name" value="HOX"/>
    <property type="match status" value="1"/>
</dbReference>
<dbReference type="SUPFAM" id="SSF46689">
    <property type="entry name" value="Homeodomain-like"/>
    <property type="match status" value="1"/>
</dbReference>
<dbReference type="PROSITE" id="PS50071">
    <property type="entry name" value="HOMEOBOX_2"/>
    <property type="match status" value="1"/>
</dbReference>
<protein>
    <recommendedName>
        <fullName>Homeobox protein 12</fullName>
        <shortName>DdHbx-12</shortName>
    </recommendedName>
</protein>
<sequence length="846" mass="96717">MTSTANNNTSFYCNNNNSNNNININCCSNTGHNGNNTTETTLTTVNEERCAPTPTPTSTPPHGSALNIQNSNNGCNNIIGSSSNTLSTPSVQATPPTPPPSSSSLLVQPMIVTPSPVVATTSSLITNDDNLNSSTNYLMLPHQAQSSAMTIVQPPPPSTPLSSSSTVVPASTPPPSVMTPITTIQTTATPPSLQPTIHHQTALSFLGYTYNEQYQQNICQLYHQLNANGNGNGNGNGNHNNNNNNYNYNNNSFYQHQQHQHGLYYNQFPIPMNSSVPIIPTQQYIGTKQPQSQSQSQQLQPQPQPQPQLQPQLQSQPQSQQLKRKEASYHNNNNNNNNNNNNNNNNNNNNNNPYNRPTKKIMVSQGLPPISSSPSFQNLNNKYFDFNQPITRNNYNQVNYNNNNNNNNNNNNNYNNISNNNPCNNNNNNKPNNNPNNNNSNSNKTYINKQHRDYGYENNNNNNNKTFQQTSQQQQQQQQQIYKKQNCNNYIDESGDDESGEEYQNYQPYQQYQNFKQNNKDNNNNDDDDDDDDDEEEEEEEEDDNDNCNGNDSYDEENNNNNNNNNNNNQFKNESIIIGDNYYEIINDRIKSIKQKLHFLEKNSKFQWIREKSFNFINEFTGESVVNEELGIRGSKDFSYLKYKTLNPSLDNYITQERIELKNPLIKANIEKLKKDFNFEITKINTTKSESLEIMKSIQQLSTTVRSPLLDRSDLKAQRNHIHGFFTLIIAHQKCLSFDFIYQMRPQSMDHQHGFSNTFTDDFTNGGGCSISDKKNRRTLNDQYKSFISDYFKNHSDHPYPNEDEKIIISALIDLSKYQRNNWFSNKRSREKNQRIVNLKKQIGFH</sequence>
<gene>
    <name type="primary">hbx12</name>
    <name type="ORF">DDB_G0286733</name>
</gene>
<evidence type="ECO:0000250" key="1"/>
<evidence type="ECO:0000255" key="2"/>
<evidence type="ECO:0000255" key="3">
    <source>
        <dbReference type="PROSITE-ProRule" id="PRU00108"/>
    </source>
</evidence>
<evidence type="ECO:0000256" key="4">
    <source>
        <dbReference type="SAM" id="MobiDB-lite"/>
    </source>
</evidence>
<reference key="1">
    <citation type="journal article" date="2005" name="Nature">
        <title>The genome of the social amoeba Dictyostelium discoideum.</title>
        <authorList>
            <person name="Eichinger L."/>
            <person name="Pachebat J.A."/>
            <person name="Gloeckner G."/>
            <person name="Rajandream M.A."/>
            <person name="Sucgang R."/>
            <person name="Berriman M."/>
            <person name="Song J."/>
            <person name="Olsen R."/>
            <person name="Szafranski K."/>
            <person name="Xu Q."/>
            <person name="Tunggal B."/>
            <person name="Kummerfeld S."/>
            <person name="Madera M."/>
            <person name="Konfortov B.A."/>
            <person name="Rivero F."/>
            <person name="Bankier A.T."/>
            <person name="Lehmann R."/>
            <person name="Hamlin N."/>
            <person name="Davies R."/>
            <person name="Gaudet P."/>
            <person name="Fey P."/>
            <person name="Pilcher K."/>
            <person name="Chen G."/>
            <person name="Saunders D."/>
            <person name="Sodergren E.J."/>
            <person name="Davis P."/>
            <person name="Kerhornou A."/>
            <person name="Nie X."/>
            <person name="Hall N."/>
            <person name="Anjard C."/>
            <person name="Hemphill L."/>
            <person name="Bason N."/>
            <person name="Farbrother P."/>
            <person name="Desany B."/>
            <person name="Just E."/>
            <person name="Morio T."/>
            <person name="Rost R."/>
            <person name="Churcher C.M."/>
            <person name="Cooper J."/>
            <person name="Haydock S."/>
            <person name="van Driessche N."/>
            <person name="Cronin A."/>
            <person name="Goodhead I."/>
            <person name="Muzny D.M."/>
            <person name="Mourier T."/>
            <person name="Pain A."/>
            <person name="Lu M."/>
            <person name="Harper D."/>
            <person name="Lindsay R."/>
            <person name="Hauser H."/>
            <person name="James K.D."/>
            <person name="Quiles M."/>
            <person name="Madan Babu M."/>
            <person name="Saito T."/>
            <person name="Buchrieser C."/>
            <person name="Wardroper A."/>
            <person name="Felder M."/>
            <person name="Thangavelu M."/>
            <person name="Johnson D."/>
            <person name="Knights A."/>
            <person name="Loulseged H."/>
            <person name="Mungall K.L."/>
            <person name="Oliver K."/>
            <person name="Price C."/>
            <person name="Quail M.A."/>
            <person name="Urushihara H."/>
            <person name="Hernandez J."/>
            <person name="Rabbinowitsch E."/>
            <person name="Steffen D."/>
            <person name="Sanders M."/>
            <person name="Ma J."/>
            <person name="Kohara Y."/>
            <person name="Sharp S."/>
            <person name="Simmonds M.N."/>
            <person name="Spiegler S."/>
            <person name="Tivey A."/>
            <person name="Sugano S."/>
            <person name="White B."/>
            <person name="Walker D."/>
            <person name="Woodward J.R."/>
            <person name="Winckler T."/>
            <person name="Tanaka Y."/>
            <person name="Shaulsky G."/>
            <person name="Schleicher M."/>
            <person name="Weinstock G.M."/>
            <person name="Rosenthal A."/>
            <person name="Cox E.C."/>
            <person name="Chisholm R.L."/>
            <person name="Gibbs R.A."/>
            <person name="Loomis W.F."/>
            <person name="Platzer M."/>
            <person name="Kay R.R."/>
            <person name="Williams J.G."/>
            <person name="Dear P.H."/>
            <person name="Noegel A.A."/>
            <person name="Barrell B.G."/>
            <person name="Kuspa A."/>
        </authorList>
    </citation>
    <scope>NUCLEOTIDE SEQUENCE [LARGE SCALE GENOMIC DNA]</scope>
    <source>
        <strain>AX4</strain>
    </source>
</reference>
<feature type="chain" id="PRO_0000388795" description="Homeobox protein 12">
    <location>
        <begin position="1"/>
        <end position="846"/>
    </location>
</feature>
<feature type="DNA-binding region" description="Homeobox" evidence="3">
    <location>
        <begin position="773"/>
        <end position="835"/>
    </location>
</feature>
<feature type="region of interest" description="Disordered" evidence="4">
    <location>
        <begin position="78"/>
        <end position="103"/>
    </location>
</feature>
<feature type="region of interest" description="Disordered" evidence="4">
    <location>
        <begin position="151"/>
        <end position="177"/>
    </location>
</feature>
<feature type="region of interest" description="Disordered" evidence="4">
    <location>
        <begin position="230"/>
        <end position="249"/>
    </location>
</feature>
<feature type="region of interest" description="Disordered" evidence="4">
    <location>
        <begin position="286"/>
        <end position="374"/>
    </location>
</feature>
<feature type="region of interest" description="Disordered" evidence="4">
    <location>
        <begin position="394"/>
        <end position="482"/>
    </location>
</feature>
<feature type="region of interest" description="Disordered" evidence="4">
    <location>
        <begin position="515"/>
        <end position="571"/>
    </location>
</feature>
<feature type="coiled-coil region" evidence="2">
    <location>
        <begin position="553"/>
        <end position="604"/>
    </location>
</feature>
<feature type="compositionally biased region" description="Low complexity" evidence="4">
    <location>
        <begin position="78"/>
        <end position="94"/>
    </location>
</feature>
<feature type="compositionally biased region" description="Low complexity" evidence="4">
    <location>
        <begin position="160"/>
        <end position="170"/>
    </location>
</feature>
<feature type="compositionally biased region" description="Low complexity" evidence="4">
    <location>
        <begin position="237"/>
        <end position="249"/>
    </location>
</feature>
<feature type="compositionally biased region" description="Low complexity" evidence="4">
    <location>
        <begin position="289"/>
        <end position="301"/>
    </location>
</feature>
<feature type="compositionally biased region" description="Low complexity" evidence="4">
    <location>
        <begin position="309"/>
        <end position="321"/>
    </location>
</feature>
<feature type="compositionally biased region" description="Low complexity" evidence="4">
    <location>
        <begin position="331"/>
        <end position="352"/>
    </location>
</feature>
<feature type="compositionally biased region" description="Low complexity" evidence="4">
    <location>
        <begin position="394"/>
        <end position="443"/>
    </location>
</feature>
<feature type="compositionally biased region" description="Low complexity" evidence="4">
    <location>
        <begin position="458"/>
        <end position="482"/>
    </location>
</feature>
<feature type="compositionally biased region" description="Acidic residues" evidence="4">
    <location>
        <begin position="524"/>
        <end position="546"/>
    </location>
</feature>
<feature type="compositionally biased region" description="Low complexity" evidence="4">
    <location>
        <begin position="559"/>
        <end position="569"/>
    </location>
</feature>
<proteinExistence type="inferred from homology"/>
<organism>
    <name type="scientific">Dictyostelium discoideum</name>
    <name type="common">Social amoeba</name>
    <dbReference type="NCBI Taxonomy" id="44689"/>
    <lineage>
        <taxon>Eukaryota</taxon>
        <taxon>Amoebozoa</taxon>
        <taxon>Evosea</taxon>
        <taxon>Eumycetozoa</taxon>
        <taxon>Dictyostelia</taxon>
        <taxon>Dictyosteliales</taxon>
        <taxon>Dictyosteliaceae</taxon>
        <taxon>Dictyostelium</taxon>
    </lineage>
</organism>
<comment type="function">
    <text evidence="1">Putative transcription factor.</text>
</comment>
<comment type="subcellular location">
    <subcellularLocation>
        <location evidence="3">Nucleus</location>
    </subcellularLocation>
</comment>